<gene>
    <name type="primary">tftE</name>
</gene>
<name>TFTE_BURCE</name>
<organism>
    <name type="scientific">Burkholderia cepacia</name>
    <name type="common">Pseudomonas cepacia</name>
    <dbReference type="NCBI Taxonomy" id="292"/>
    <lineage>
        <taxon>Bacteria</taxon>
        <taxon>Pseudomonadati</taxon>
        <taxon>Pseudomonadota</taxon>
        <taxon>Betaproteobacteria</taxon>
        <taxon>Burkholderiales</taxon>
        <taxon>Burkholderiaceae</taxon>
        <taxon>Burkholderia</taxon>
        <taxon>Burkholderia cepacia complex</taxon>
    </lineage>
</organism>
<evidence type="ECO:0000305" key="1"/>
<protein>
    <recommendedName>
        <fullName>Maleylacetate reductase</fullName>
        <ecNumber>1.3.1.32</ecNumber>
    </recommendedName>
</protein>
<proteinExistence type="inferred from homology"/>
<feature type="chain" id="PRO_0000087853" description="Maleylacetate reductase">
    <location>
        <begin position="1"/>
        <end position="352"/>
    </location>
</feature>
<accession>Q45072</accession>
<dbReference type="EC" id="1.3.1.32"/>
<dbReference type="EMBL" id="U19883">
    <property type="protein sequence ID" value="AAC43333.1"/>
    <property type="molecule type" value="Genomic_DNA"/>
</dbReference>
<dbReference type="PIR" id="I40177">
    <property type="entry name" value="I40177"/>
</dbReference>
<dbReference type="SMR" id="Q45072"/>
<dbReference type="BioCyc" id="MetaCyc:MONOMER-14680"/>
<dbReference type="UniPathway" id="UPA00686"/>
<dbReference type="GO" id="GO:0004022">
    <property type="term" value="F:alcohol dehydrogenase (NAD+) activity"/>
    <property type="evidence" value="ECO:0007669"/>
    <property type="project" value="TreeGrafter"/>
</dbReference>
<dbReference type="GO" id="GO:0018506">
    <property type="term" value="F:maleylacetate reductase activity"/>
    <property type="evidence" value="ECO:0007669"/>
    <property type="project" value="UniProtKB-EC"/>
</dbReference>
<dbReference type="GO" id="GO:0046872">
    <property type="term" value="F:metal ion binding"/>
    <property type="evidence" value="ECO:0007669"/>
    <property type="project" value="InterPro"/>
</dbReference>
<dbReference type="GO" id="GO:0046228">
    <property type="term" value="P:2,4,5-trichlorophenoxyacetic acid catabolic process"/>
    <property type="evidence" value="ECO:0007669"/>
    <property type="project" value="UniProtKB-UniPathway"/>
</dbReference>
<dbReference type="CDD" id="cd08177">
    <property type="entry name" value="MAR"/>
    <property type="match status" value="1"/>
</dbReference>
<dbReference type="FunFam" id="3.40.50.1970:FF:000015">
    <property type="entry name" value="Maleylacetate reductase 1"/>
    <property type="match status" value="1"/>
</dbReference>
<dbReference type="Gene3D" id="3.40.50.1970">
    <property type="match status" value="1"/>
</dbReference>
<dbReference type="Gene3D" id="1.20.1090.10">
    <property type="entry name" value="Dehydroquinate synthase-like - alpha domain"/>
    <property type="match status" value="1"/>
</dbReference>
<dbReference type="InterPro" id="IPR001670">
    <property type="entry name" value="ADH_Fe/GldA"/>
</dbReference>
<dbReference type="InterPro" id="IPR056798">
    <property type="entry name" value="ADH_Fe_C"/>
</dbReference>
<dbReference type="InterPro" id="IPR039697">
    <property type="entry name" value="Alcohol_dehydrogenase_Fe"/>
</dbReference>
<dbReference type="InterPro" id="IPR034786">
    <property type="entry name" value="MAR"/>
</dbReference>
<dbReference type="PANTHER" id="PTHR11496">
    <property type="entry name" value="ALCOHOL DEHYDROGENASE"/>
    <property type="match status" value="1"/>
</dbReference>
<dbReference type="PANTHER" id="PTHR11496:SF102">
    <property type="entry name" value="ALCOHOL DEHYDROGENASE 4"/>
    <property type="match status" value="1"/>
</dbReference>
<dbReference type="Pfam" id="PF25137">
    <property type="entry name" value="ADH_Fe_C"/>
    <property type="match status" value="1"/>
</dbReference>
<dbReference type="Pfam" id="PF00465">
    <property type="entry name" value="Fe-ADH"/>
    <property type="match status" value="1"/>
</dbReference>
<dbReference type="SUPFAM" id="SSF56796">
    <property type="entry name" value="Dehydroquinate synthase-like"/>
    <property type="match status" value="1"/>
</dbReference>
<sequence>MNAFLFEARIPRVVFGAGALQHLVREIDAMGSTRALVLSTPEQSADAERVAGILGSRAVGVFPRATMHVPIELAREARLEASRLGADCAVAIGGGSTTGLGKAIALESGLPILSIPTTYAGSEMTPIYGVTDNGVKQTGRDARVLPRTVIYDPELTLGLPIRMTVSSGLNAIAHAAESLYAHDGNPVIGLMAEEGIRAIGAALTPLQANPADLVARSDALYGAWLCGAVLGAVSMGLHHKLCHTLGGAFNLPHAELHTVILPHALAYNSARASQAMERIARALGVSSAPRGLFDLAERSGLPVSLAALGMPREGIELAADMAVKNPYPNPRPLERDAIRVLLEHAYDGVRPS</sequence>
<keyword id="KW-0058">Aromatic hydrocarbons catabolism</keyword>
<keyword id="KW-0520">NAD</keyword>
<keyword id="KW-0560">Oxidoreductase</keyword>
<reference key="1">
    <citation type="journal article" date="1995" name="Appl. Environ. Microbiol.">
        <title>Sequence analysis of a gene cluster involved in metabolism of 2,4,5-trichlorophenoxyacetic acid by Burkholderia cepacia AC1100.</title>
        <authorList>
            <person name="Daubaras D.L."/>
            <person name="Hershberger C.D."/>
            <person name="Kitano K."/>
            <person name="Chakrabarty A.M."/>
        </authorList>
    </citation>
    <scope>NUCLEOTIDE SEQUENCE [GENOMIC DNA]</scope>
    <source>
        <strain>AC1100</strain>
    </source>
</reference>
<comment type="catalytic activity">
    <reaction>
        <text>3-oxoadipate + NAD(+) = maleylacetate + NADH + H(+)</text>
        <dbReference type="Rhea" id="RHEA:16981"/>
        <dbReference type="ChEBI" id="CHEBI:15378"/>
        <dbReference type="ChEBI" id="CHEBI:15775"/>
        <dbReference type="ChEBI" id="CHEBI:16468"/>
        <dbReference type="ChEBI" id="CHEBI:57540"/>
        <dbReference type="ChEBI" id="CHEBI:57945"/>
        <dbReference type="EC" id="1.3.1.32"/>
    </reaction>
</comment>
<comment type="catalytic activity">
    <reaction>
        <text>3-oxoadipate + NADP(+) = maleylacetate + NADPH + H(+)</text>
        <dbReference type="Rhea" id="RHEA:16985"/>
        <dbReference type="ChEBI" id="CHEBI:15378"/>
        <dbReference type="ChEBI" id="CHEBI:15775"/>
        <dbReference type="ChEBI" id="CHEBI:16468"/>
        <dbReference type="ChEBI" id="CHEBI:57783"/>
        <dbReference type="ChEBI" id="CHEBI:58349"/>
        <dbReference type="EC" id="1.3.1.32"/>
    </reaction>
</comment>
<comment type="pathway">
    <text>Xenobiotic degradation; (2,4,5-trichlorophenoxy)acetate degradation.</text>
</comment>
<comment type="similarity">
    <text evidence="1">Belongs to the iron-containing alcohol dehydrogenase family.</text>
</comment>